<keyword id="KW-0012">Acyltransferase</keyword>
<keyword id="KW-0028">Amino-acid biosynthesis</keyword>
<keyword id="KW-0963">Cytoplasm</keyword>
<keyword id="KW-0220">Diaminopimelate biosynthesis</keyword>
<keyword id="KW-0457">Lysine biosynthesis</keyword>
<keyword id="KW-0677">Repeat</keyword>
<keyword id="KW-0808">Transferase</keyword>
<name>DAPD_BRUMB</name>
<organism>
    <name type="scientific">Brucella melitensis biotype 2 (strain ATCC 23457)</name>
    <dbReference type="NCBI Taxonomy" id="546272"/>
    <lineage>
        <taxon>Bacteria</taxon>
        <taxon>Pseudomonadati</taxon>
        <taxon>Pseudomonadota</taxon>
        <taxon>Alphaproteobacteria</taxon>
        <taxon>Hyphomicrobiales</taxon>
        <taxon>Brucellaceae</taxon>
        <taxon>Brucella/Ochrobactrum group</taxon>
        <taxon>Brucella</taxon>
    </lineage>
</organism>
<evidence type="ECO:0000255" key="1">
    <source>
        <dbReference type="HAMAP-Rule" id="MF_00811"/>
    </source>
</evidence>
<gene>
    <name evidence="1" type="primary">dapD</name>
    <name type="ordered locus">BMEA_B1014</name>
</gene>
<reference key="1">
    <citation type="submission" date="2009-03" db="EMBL/GenBank/DDBJ databases">
        <title>Brucella melitensis ATCC 23457 whole genome shotgun sequencing project.</title>
        <authorList>
            <person name="Setubal J.C."/>
            <person name="Boyle S."/>
            <person name="Crasta O.R."/>
            <person name="Gillespie J.J."/>
            <person name="Kenyon R.W."/>
            <person name="Lu J."/>
            <person name="Mane S."/>
            <person name="Nagrani S."/>
            <person name="Shallom J.M."/>
            <person name="Shallom S."/>
            <person name="Shukla M."/>
            <person name="Snyder E.E."/>
            <person name="Sobral B.W."/>
            <person name="Wattam A.R."/>
            <person name="Will R."/>
            <person name="Williams K."/>
            <person name="Yoo H."/>
            <person name="Munk C."/>
            <person name="Tapia R."/>
            <person name="Han C."/>
            <person name="Detter J.C."/>
            <person name="Bruce D."/>
            <person name="Brettin T.S."/>
        </authorList>
    </citation>
    <scope>NUCLEOTIDE SEQUENCE [LARGE SCALE GENOMIC DNA]</scope>
    <source>
        <strain>ATCC 23457</strain>
    </source>
</reference>
<comment type="catalytic activity">
    <reaction evidence="1">
        <text>(S)-2,3,4,5-tetrahydrodipicolinate + succinyl-CoA + H2O = (S)-2-succinylamino-6-oxoheptanedioate + CoA</text>
        <dbReference type="Rhea" id="RHEA:17325"/>
        <dbReference type="ChEBI" id="CHEBI:15377"/>
        <dbReference type="ChEBI" id="CHEBI:15685"/>
        <dbReference type="ChEBI" id="CHEBI:16845"/>
        <dbReference type="ChEBI" id="CHEBI:57287"/>
        <dbReference type="ChEBI" id="CHEBI:57292"/>
        <dbReference type="EC" id="2.3.1.117"/>
    </reaction>
</comment>
<comment type="pathway">
    <text evidence="1">Amino-acid biosynthesis; L-lysine biosynthesis via DAP pathway; LL-2,6-diaminopimelate from (S)-tetrahydrodipicolinate (succinylase route): step 1/3.</text>
</comment>
<comment type="subunit">
    <text evidence="1">Homotrimer.</text>
</comment>
<comment type="subcellular location">
    <subcellularLocation>
        <location evidence="1">Cytoplasm</location>
    </subcellularLocation>
</comment>
<comment type="similarity">
    <text evidence="1">Belongs to the transferase hexapeptide repeat family.</text>
</comment>
<protein>
    <recommendedName>
        <fullName evidence="1">2,3,4,5-tetrahydropyridine-2,6-dicarboxylate N-succinyltransferase</fullName>
        <ecNumber evidence="1">2.3.1.117</ecNumber>
    </recommendedName>
    <alternativeName>
        <fullName evidence="1">Tetrahydrodipicolinate N-succinyltransferase</fullName>
        <shortName evidence="1">THDP succinyltransferase</shortName>
        <shortName evidence="1">THP succinyltransferase</shortName>
        <shortName evidence="1">Tetrahydropicolinate succinylase</shortName>
    </alternativeName>
</protein>
<proteinExistence type="inferred from homology"/>
<feature type="chain" id="PRO_1000148582" description="2,3,4,5-tetrahydropyridine-2,6-dicarboxylate N-succinyltransferase">
    <location>
        <begin position="1"/>
        <end position="284"/>
    </location>
</feature>
<feature type="binding site" evidence="1">
    <location>
        <position position="111"/>
    </location>
    <ligand>
        <name>substrate</name>
    </ligand>
</feature>
<feature type="binding site" evidence="1">
    <location>
        <position position="148"/>
    </location>
    <ligand>
        <name>substrate</name>
    </ligand>
</feature>
<sequence>MTKPDLASLEKTIEKAFDERDGINTATRGEVREAVEQSLILLDRGEVRVAEKQADGNWHVNQWLKKAVLLSFRLNPMEVIKGGPGQSSWWDKVPSKFDGWTANEFEKAGFRAVPSCIVRHSAYIAPNAILMPSFVNLGAYVDKGAMIDTWATVGSCAQIGKNVHLSGGVGIGGVLEPMQAGPTIIEDNCFIGARSEVVEGCIVREGSVLGMGVFIGKSTKIVDRATGEVFYGEVPPYSVVVAGTMPGKNVPGENWGPSLYCAVIVKRADEKTRSKTSINELLRD</sequence>
<accession>C0RMG8</accession>
<dbReference type="EC" id="2.3.1.117" evidence="1"/>
<dbReference type="EMBL" id="CP001489">
    <property type="protein sequence ID" value="ACO02801.1"/>
    <property type="molecule type" value="Genomic_DNA"/>
</dbReference>
<dbReference type="RefSeq" id="WP_004685944.1">
    <property type="nucleotide sequence ID" value="NC_012442.1"/>
</dbReference>
<dbReference type="SMR" id="C0RMG8"/>
<dbReference type="KEGG" id="bmi:BMEA_B1014"/>
<dbReference type="HOGENOM" id="CLU_050859_0_1_5"/>
<dbReference type="UniPathway" id="UPA00034">
    <property type="reaction ID" value="UER00019"/>
</dbReference>
<dbReference type="Proteomes" id="UP000001748">
    <property type="component" value="Chromosome II"/>
</dbReference>
<dbReference type="GO" id="GO:0005737">
    <property type="term" value="C:cytoplasm"/>
    <property type="evidence" value="ECO:0007669"/>
    <property type="project" value="UniProtKB-SubCell"/>
</dbReference>
<dbReference type="GO" id="GO:0008666">
    <property type="term" value="F:2,3,4,5-tetrahydropyridine-2,6-dicarboxylate N-succinyltransferase activity"/>
    <property type="evidence" value="ECO:0007669"/>
    <property type="project" value="UniProtKB-UniRule"/>
</dbReference>
<dbReference type="GO" id="GO:0019877">
    <property type="term" value="P:diaminopimelate biosynthetic process"/>
    <property type="evidence" value="ECO:0007669"/>
    <property type="project" value="UniProtKB-UniRule"/>
</dbReference>
<dbReference type="GO" id="GO:0009089">
    <property type="term" value="P:lysine biosynthetic process via diaminopimelate"/>
    <property type="evidence" value="ECO:0007669"/>
    <property type="project" value="UniProtKB-UniRule"/>
</dbReference>
<dbReference type="CDD" id="cd03350">
    <property type="entry name" value="LbH_THP_succinylT"/>
    <property type="match status" value="1"/>
</dbReference>
<dbReference type="Gene3D" id="2.160.10.10">
    <property type="entry name" value="Hexapeptide repeat proteins"/>
    <property type="match status" value="1"/>
</dbReference>
<dbReference type="Gene3D" id="1.10.166.10">
    <property type="entry name" value="Tetrahydrodipicolinate-N-succinyltransferase, N-terminal domain"/>
    <property type="match status" value="1"/>
</dbReference>
<dbReference type="HAMAP" id="MF_00811">
    <property type="entry name" value="DapD"/>
    <property type="match status" value="1"/>
</dbReference>
<dbReference type="InterPro" id="IPR005664">
    <property type="entry name" value="DapD_Trfase_Hexpep_rpt_fam"/>
</dbReference>
<dbReference type="InterPro" id="IPR001451">
    <property type="entry name" value="Hexapep"/>
</dbReference>
<dbReference type="InterPro" id="IPR018357">
    <property type="entry name" value="Hexapep_transf_CS"/>
</dbReference>
<dbReference type="InterPro" id="IPR023180">
    <property type="entry name" value="THP_succinylTrfase_dom1"/>
</dbReference>
<dbReference type="InterPro" id="IPR037133">
    <property type="entry name" value="THP_succinylTrfase_N_sf"/>
</dbReference>
<dbReference type="InterPro" id="IPR050179">
    <property type="entry name" value="Trans_hexapeptide_repeat"/>
</dbReference>
<dbReference type="InterPro" id="IPR011004">
    <property type="entry name" value="Trimer_LpxA-like_sf"/>
</dbReference>
<dbReference type="NCBIfam" id="TIGR00965">
    <property type="entry name" value="dapD"/>
    <property type="match status" value="1"/>
</dbReference>
<dbReference type="NCBIfam" id="NF008808">
    <property type="entry name" value="PRK11830.1"/>
    <property type="match status" value="1"/>
</dbReference>
<dbReference type="PANTHER" id="PTHR43300:SF10">
    <property type="entry name" value="2,3,4,5-TETRAHYDROPYRIDINE-2,6-DICARBOXYLATE N-ACETYLTRANSFERASE"/>
    <property type="match status" value="1"/>
</dbReference>
<dbReference type="PANTHER" id="PTHR43300">
    <property type="entry name" value="ACETYLTRANSFERASE"/>
    <property type="match status" value="1"/>
</dbReference>
<dbReference type="Pfam" id="PF14602">
    <property type="entry name" value="Hexapep_2"/>
    <property type="match status" value="1"/>
</dbReference>
<dbReference type="Pfam" id="PF14805">
    <property type="entry name" value="THDPS_N_2"/>
    <property type="match status" value="1"/>
</dbReference>
<dbReference type="SUPFAM" id="SSF51161">
    <property type="entry name" value="Trimeric LpxA-like enzymes"/>
    <property type="match status" value="1"/>
</dbReference>
<dbReference type="PROSITE" id="PS00101">
    <property type="entry name" value="HEXAPEP_TRANSFERASES"/>
    <property type="match status" value="1"/>
</dbReference>